<gene>
    <name type="ordered locus">SAUSA300_2620</name>
</gene>
<evidence type="ECO:0000305" key="1"/>
<organism>
    <name type="scientific">Staphylococcus aureus (strain USA300)</name>
    <dbReference type="NCBI Taxonomy" id="367830"/>
    <lineage>
        <taxon>Bacteria</taxon>
        <taxon>Bacillati</taxon>
        <taxon>Bacillota</taxon>
        <taxon>Bacilli</taxon>
        <taxon>Bacillales</taxon>
        <taxon>Staphylococcaceae</taxon>
        <taxon>Staphylococcus</taxon>
    </lineage>
</organism>
<feature type="chain" id="PRO_0000299515" description="UPF0312 protein SAUSA300_2620">
    <location>
        <begin position="1"/>
        <end position="171"/>
    </location>
</feature>
<reference key="1">
    <citation type="journal article" date="2006" name="Lancet">
        <title>Complete genome sequence of USA300, an epidemic clone of community-acquired meticillin-resistant Staphylococcus aureus.</title>
        <authorList>
            <person name="Diep B.A."/>
            <person name="Gill S.R."/>
            <person name="Chang R.F."/>
            <person name="Phan T.H."/>
            <person name="Chen J.H."/>
            <person name="Davidson M.G."/>
            <person name="Lin F."/>
            <person name="Lin J."/>
            <person name="Carleton H.A."/>
            <person name="Mongodin E.F."/>
            <person name="Sensabaugh G.F."/>
            <person name="Perdreau-Remington F."/>
        </authorList>
    </citation>
    <scope>NUCLEOTIDE SEQUENCE [LARGE SCALE GENOMIC DNA]</scope>
    <source>
        <strain>USA300</strain>
    </source>
</reference>
<sequence>MTNFTFDGAHSSLEFQIKHLMVSKVKGSFDQFDVAVEGDINDFSTLKATATIIPSSINTKNEARDNHLKSGDFFGTDEFDKITFVTKSVSESKVVGDLTIKGITNEETFDVEFNGVSKNPMDGSQVTGIIVTGTINREKYGINFNQALETGGVMLGKDVKFEASAEFSISE</sequence>
<dbReference type="EMBL" id="CP000255">
    <property type="protein sequence ID" value="ABD20851.1"/>
    <property type="molecule type" value="Genomic_DNA"/>
</dbReference>
<dbReference type="RefSeq" id="WP_000181129.1">
    <property type="nucleotide sequence ID" value="NZ_CP027476.1"/>
</dbReference>
<dbReference type="SMR" id="Q2FDH4"/>
<dbReference type="KEGG" id="saa:SAUSA300_2620"/>
<dbReference type="HOGENOM" id="CLU_071003_3_0_9"/>
<dbReference type="OMA" id="IDKQGQH"/>
<dbReference type="Proteomes" id="UP000001939">
    <property type="component" value="Chromosome"/>
</dbReference>
<dbReference type="Gene3D" id="2.40.128.110">
    <property type="entry name" value="Lipid/polyisoprenoid-binding, YceI-like"/>
    <property type="match status" value="1"/>
</dbReference>
<dbReference type="InterPro" id="IPR007372">
    <property type="entry name" value="Lipid/polyisoprenoid-bd_YceI"/>
</dbReference>
<dbReference type="InterPro" id="IPR036761">
    <property type="entry name" value="TTHA0802/YceI-like_sf"/>
</dbReference>
<dbReference type="PANTHER" id="PTHR34406">
    <property type="entry name" value="PROTEIN YCEI"/>
    <property type="match status" value="1"/>
</dbReference>
<dbReference type="PANTHER" id="PTHR34406:SF1">
    <property type="entry name" value="PROTEIN YCEI"/>
    <property type="match status" value="1"/>
</dbReference>
<dbReference type="Pfam" id="PF04264">
    <property type="entry name" value="YceI"/>
    <property type="match status" value="1"/>
</dbReference>
<dbReference type="SMART" id="SM00867">
    <property type="entry name" value="YceI"/>
    <property type="match status" value="1"/>
</dbReference>
<dbReference type="SUPFAM" id="SSF101874">
    <property type="entry name" value="YceI-like"/>
    <property type="match status" value="1"/>
</dbReference>
<comment type="similarity">
    <text evidence="1">Belongs to the UPF0312 family.</text>
</comment>
<protein>
    <recommendedName>
        <fullName>UPF0312 protein SAUSA300_2620</fullName>
    </recommendedName>
</protein>
<name>Y2620_STAA3</name>
<accession>Q2FDH4</accession>
<proteinExistence type="inferred from homology"/>